<feature type="chain" id="PRO_1000196326" description="Small ribosomal subunit protein bS16">
    <location>
        <begin position="1"/>
        <end position="136"/>
    </location>
</feature>
<organism>
    <name type="scientific">Pseudarthrobacter chlorophenolicus (strain ATCC 700700 / DSM 12829 / CIP 107037 / JCM 12360 / KCTC 9906 / NCIMB 13794 / A6)</name>
    <name type="common">Arthrobacter chlorophenolicus</name>
    <dbReference type="NCBI Taxonomy" id="452863"/>
    <lineage>
        <taxon>Bacteria</taxon>
        <taxon>Bacillati</taxon>
        <taxon>Actinomycetota</taxon>
        <taxon>Actinomycetes</taxon>
        <taxon>Micrococcales</taxon>
        <taxon>Micrococcaceae</taxon>
        <taxon>Pseudarthrobacter</taxon>
    </lineage>
</organism>
<dbReference type="EMBL" id="CP001341">
    <property type="protein sequence ID" value="ACL40189.1"/>
    <property type="molecule type" value="Genomic_DNA"/>
</dbReference>
<dbReference type="RefSeq" id="WP_015937405.1">
    <property type="nucleotide sequence ID" value="NC_011886.1"/>
</dbReference>
<dbReference type="SMR" id="B8HA97"/>
<dbReference type="STRING" id="452863.Achl_2223"/>
<dbReference type="KEGG" id="ach:Achl_2223"/>
<dbReference type="eggNOG" id="COG0228">
    <property type="taxonomic scope" value="Bacteria"/>
</dbReference>
<dbReference type="HOGENOM" id="CLU_100590_1_0_11"/>
<dbReference type="OrthoDB" id="9807878at2"/>
<dbReference type="Proteomes" id="UP000002505">
    <property type="component" value="Chromosome"/>
</dbReference>
<dbReference type="GO" id="GO:0005737">
    <property type="term" value="C:cytoplasm"/>
    <property type="evidence" value="ECO:0007669"/>
    <property type="project" value="UniProtKB-ARBA"/>
</dbReference>
<dbReference type="GO" id="GO:0015935">
    <property type="term" value="C:small ribosomal subunit"/>
    <property type="evidence" value="ECO:0007669"/>
    <property type="project" value="TreeGrafter"/>
</dbReference>
<dbReference type="GO" id="GO:0003735">
    <property type="term" value="F:structural constituent of ribosome"/>
    <property type="evidence" value="ECO:0007669"/>
    <property type="project" value="InterPro"/>
</dbReference>
<dbReference type="GO" id="GO:0006412">
    <property type="term" value="P:translation"/>
    <property type="evidence" value="ECO:0007669"/>
    <property type="project" value="UniProtKB-UniRule"/>
</dbReference>
<dbReference type="Gene3D" id="3.30.1320.10">
    <property type="match status" value="1"/>
</dbReference>
<dbReference type="HAMAP" id="MF_00385">
    <property type="entry name" value="Ribosomal_bS16"/>
    <property type="match status" value="1"/>
</dbReference>
<dbReference type="InterPro" id="IPR000307">
    <property type="entry name" value="Ribosomal_bS16"/>
</dbReference>
<dbReference type="InterPro" id="IPR020592">
    <property type="entry name" value="Ribosomal_bS16_CS"/>
</dbReference>
<dbReference type="InterPro" id="IPR023803">
    <property type="entry name" value="Ribosomal_bS16_dom_sf"/>
</dbReference>
<dbReference type="NCBIfam" id="NF011093">
    <property type="entry name" value="PRK14520.1"/>
    <property type="match status" value="1"/>
</dbReference>
<dbReference type="NCBIfam" id="TIGR00002">
    <property type="entry name" value="S16"/>
    <property type="match status" value="1"/>
</dbReference>
<dbReference type="PANTHER" id="PTHR12919">
    <property type="entry name" value="30S RIBOSOMAL PROTEIN S16"/>
    <property type="match status" value="1"/>
</dbReference>
<dbReference type="PANTHER" id="PTHR12919:SF20">
    <property type="entry name" value="SMALL RIBOSOMAL SUBUNIT PROTEIN BS16M"/>
    <property type="match status" value="1"/>
</dbReference>
<dbReference type="Pfam" id="PF00886">
    <property type="entry name" value="Ribosomal_S16"/>
    <property type="match status" value="1"/>
</dbReference>
<dbReference type="SUPFAM" id="SSF54565">
    <property type="entry name" value="Ribosomal protein S16"/>
    <property type="match status" value="1"/>
</dbReference>
<dbReference type="PROSITE" id="PS00732">
    <property type="entry name" value="RIBOSOMAL_S16"/>
    <property type="match status" value="1"/>
</dbReference>
<keyword id="KW-0687">Ribonucleoprotein</keyword>
<keyword id="KW-0689">Ribosomal protein</keyword>
<proteinExistence type="inferred from homology"/>
<name>RS16_PSECP</name>
<reference key="1">
    <citation type="submission" date="2009-01" db="EMBL/GenBank/DDBJ databases">
        <title>Complete sequence of chromosome of Arthrobacter chlorophenolicus A6.</title>
        <authorList>
            <consortium name="US DOE Joint Genome Institute"/>
            <person name="Lucas S."/>
            <person name="Copeland A."/>
            <person name="Lapidus A."/>
            <person name="Glavina del Rio T."/>
            <person name="Tice H."/>
            <person name="Bruce D."/>
            <person name="Goodwin L."/>
            <person name="Pitluck S."/>
            <person name="Goltsman E."/>
            <person name="Clum A."/>
            <person name="Larimer F."/>
            <person name="Land M."/>
            <person name="Hauser L."/>
            <person name="Kyrpides N."/>
            <person name="Mikhailova N."/>
            <person name="Jansson J."/>
            <person name="Richardson P."/>
        </authorList>
    </citation>
    <scope>NUCLEOTIDE SEQUENCE [LARGE SCALE GENOMIC DNA]</scope>
    <source>
        <strain>ATCC 700700 / DSM 12829 / CIP 107037 / JCM 12360 / KCTC 9906 / NCIMB 13794 / A6</strain>
    </source>
</reference>
<gene>
    <name evidence="1" type="primary">rpsP</name>
    <name type="ordered locus">Achl_2223</name>
</gene>
<evidence type="ECO:0000255" key="1">
    <source>
        <dbReference type="HAMAP-Rule" id="MF_00385"/>
    </source>
</evidence>
<evidence type="ECO:0000305" key="2"/>
<protein>
    <recommendedName>
        <fullName evidence="1">Small ribosomal subunit protein bS16</fullName>
    </recommendedName>
    <alternativeName>
        <fullName evidence="2">30S ribosomal protein S16</fullName>
    </alternativeName>
</protein>
<sequence length="136" mass="15085">MAVKIRLKRFGKMRAPYYRIVVMDSRAKRDGRAIEEIGKYHPTEEPSYIEVASERAQYWLSVGAQPSEQVAAILKITGDWQKFKGLPGQEGTLKTKGEKEAFVAPEKGSVIIPEAITKKASKSEAAEAEAETTEAE</sequence>
<accession>B8HA97</accession>
<comment type="similarity">
    <text evidence="1">Belongs to the bacterial ribosomal protein bS16 family.</text>
</comment>